<keyword id="KW-0059">Arsenical resistance</keyword>
<keyword id="KW-0963">Cytoplasm</keyword>
<keyword id="KW-1015">Disulfide bond</keyword>
<keyword id="KW-0560">Oxidoreductase</keyword>
<keyword id="KW-0676">Redox-active center</keyword>
<reference key="1">
    <citation type="submission" date="2008-10" db="EMBL/GenBank/DDBJ databases">
        <title>Genome sequence of Bacillus cereus AH187.</title>
        <authorList>
            <person name="Dodson R.J."/>
            <person name="Durkin A.S."/>
            <person name="Rosovitz M.J."/>
            <person name="Rasko D.A."/>
            <person name="Kolsto A.B."/>
            <person name="Okstad O.A."/>
            <person name="Ravel J."/>
            <person name="Sutton G."/>
        </authorList>
    </citation>
    <scope>NUCLEOTIDE SEQUENCE [LARGE SCALE GENOMIC DNA]</scope>
    <source>
        <strain>AH187</strain>
    </source>
</reference>
<evidence type="ECO:0000255" key="1">
    <source>
        <dbReference type="HAMAP-Rule" id="MF_01624"/>
    </source>
</evidence>
<proteinExistence type="inferred from homology"/>
<comment type="function">
    <text evidence="1">Catalyzes the reduction of arsenate [As(V)] to arsenite [As(III)].</text>
</comment>
<comment type="catalytic activity">
    <reaction evidence="1">
        <text>arsenate + [thioredoxin]-dithiol + H(+) = arsenite + [thioredoxin]-disulfide + H2O</text>
        <dbReference type="Rhea" id="RHEA:43848"/>
        <dbReference type="Rhea" id="RHEA-COMP:10698"/>
        <dbReference type="Rhea" id="RHEA-COMP:10700"/>
        <dbReference type="ChEBI" id="CHEBI:15377"/>
        <dbReference type="ChEBI" id="CHEBI:15378"/>
        <dbReference type="ChEBI" id="CHEBI:29242"/>
        <dbReference type="ChEBI" id="CHEBI:29950"/>
        <dbReference type="ChEBI" id="CHEBI:48597"/>
        <dbReference type="ChEBI" id="CHEBI:50058"/>
        <dbReference type="EC" id="1.20.4.4"/>
    </reaction>
</comment>
<comment type="subcellular location">
    <subcellularLocation>
        <location evidence="1">Cytoplasm</location>
    </subcellularLocation>
</comment>
<comment type="similarity">
    <text evidence="1">Belongs to the low molecular weight phosphotyrosine protein phosphatase family. Thioredoxin-coupled ArsC subfamily.</text>
</comment>
<protein>
    <recommendedName>
        <fullName evidence="1">Arsenate reductase</fullName>
        <ecNumber evidence="1">1.20.4.4</ecNumber>
    </recommendedName>
</protein>
<gene>
    <name evidence="1" type="primary">arsC</name>
    <name type="ordered locus">BCAH187_A3221</name>
</gene>
<name>ARSC_BACC7</name>
<feature type="chain" id="PRO_1000186117" description="Arsenate reductase">
    <location>
        <begin position="1"/>
        <end position="134"/>
    </location>
</feature>
<feature type="active site" description="Nucleophile" evidence="1">
    <location>
        <position position="11"/>
    </location>
</feature>
<feature type="active site" description="Nucleophile" evidence="1">
    <location>
        <position position="83"/>
    </location>
</feature>
<feature type="active site" description="Nucleophile" evidence="1">
    <location>
        <position position="90"/>
    </location>
</feature>
<feature type="disulfide bond" description="Redox-active; alternate" evidence="1">
    <location>
        <begin position="11"/>
        <end position="83"/>
    </location>
</feature>
<feature type="disulfide bond" description="Redox-active; alternate" evidence="1">
    <location>
        <begin position="83"/>
        <end position="90"/>
    </location>
</feature>
<organism>
    <name type="scientific">Bacillus cereus (strain AH187)</name>
    <dbReference type="NCBI Taxonomy" id="405534"/>
    <lineage>
        <taxon>Bacteria</taxon>
        <taxon>Bacillati</taxon>
        <taxon>Bacillota</taxon>
        <taxon>Bacilli</taxon>
        <taxon>Bacillales</taxon>
        <taxon>Bacillaceae</taxon>
        <taxon>Bacillus</taxon>
        <taxon>Bacillus cereus group</taxon>
    </lineage>
</organism>
<accession>B7HWU2</accession>
<sequence length="134" mass="15036">MENKKTIYFLCTGNSCRSQMAEAWGKKYLGDNWNVYSAGIEAHGVNPNAIKAMNEVNIDITNQTSDIIDANILNRADLVVTLCSHADSVCPSTPPDVNRVHWGFDDPAGKEWSEFQRVRDEIGERIKRFSETGE</sequence>
<dbReference type="EC" id="1.20.4.4" evidence="1"/>
<dbReference type="EMBL" id="CP001177">
    <property type="protein sequence ID" value="ACJ78052.1"/>
    <property type="molecule type" value="Genomic_DNA"/>
</dbReference>
<dbReference type="SMR" id="B7HWU2"/>
<dbReference type="KEGG" id="bcr:BCAH187_A3221"/>
<dbReference type="HOGENOM" id="CLU_071415_3_2_9"/>
<dbReference type="Proteomes" id="UP000002214">
    <property type="component" value="Chromosome"/>
</dbReference>
<dbReference type="GO" id="GO:0005737">
    <property type="term" value="C:cytoplasm"/>
    <property type="evidence" value="ECO:0007669"/>
    <property type="project" value="UniProtKB-SubCell"/>
</dbReference>
<dbReference type="GO" id="GO:0030612">
    <property type="term" value="F:arsenate reductase (thioredoxin) activity"/>
    <property type="evidence" value="ECO:0007669"/>
    <property type="project" value="UniProtKB-UniRule"/>
</dbReference>
<dbReference type="GO" id="GO:0004725">
    <property type="term" value="F:protein tyrosine phosphatase activity"/>
    <property type="evidence" value="ECO:0007669"/>
    <property type="project" value="InterPro"/>
</dbReference>
<dbReference type="GO" id="GO:0046685">
    <property type="term" value="P:response to arsenic-containing substance"/>
    <property type="evidence" value="ECO:0007669"/>
    <property type="project" value="UniProtKB-KW"/>
</dbReference>
<dbReference type="CDD" id="cd16345">
    <property type="entry name" value="LMWP_ArsC"/>
    <property type="match status" value="1"/>
</dbReference>
<dbReference type="FunFam" id="3.40.50.2300:FF:000237">
    <property type="entry name" value="Arsenate reductase"/>
    <property type="match status" value="1"/>
</dbReference>
<dbReference type="Gene3D" id="3.40.50.2300">
    <property type="match status" value="1"/>
</dbReference>
<dbReference type="HAMAP" id="MF_01624">
    <property type="entry name" value="Arsenate_reduct"/>
    <property type="match status" value="1"/>
</dbReference>
<dbReference type="InterPro" id="IPR014064">
    <property type="entry name" value="Arsenate_reductase_ArsC"/>
</dbReference>
<dbReference type="InterPro" id="IPR023485">
    <property type="entry name" value="Ptyr_pPase"/>
</dbReference>
<dbReference type="InterPro" id="IPR036196">
    <property type="entry name" value="Ptyr_pPase_sf"/>
</dbReference>
<dbReference type="NCBIfam" id="TIGR02691">
    <property type="entry name" value="arsC_pI258_fam"/>
    <property type="match status" value="1"/>
</dbReference>
<dbReference type="NCBIfam" id="NF010053">
    <property type="entry name" value="PRK13530.1"/>
    <property type="match status" value="1"/>
</dbReference>
<dbReference type="PANTHER" id="PTHR43428">
    <property type="entry name" value="ARSENATE REDUCTASE"/>
    <property type="match status" value="1"/>
</dbReference>
<dbReference type="PANTHER" id="PTHR43428:SF1">
    <property type="entry name" value="ARSENATE REDUCTASE"/>
    <property type="match status" value="1"/>
</dbReference>
<dbReference type="Pfam" id="PF01451">
    <property type="entry name" value="LMWPc"/>
    <property type="match status" value="1"/>
</dbReference>
<dbReference type="SMART" id="SM00226">
    <property type="entry name" value="LMWPc"/>
    <property type="match status" value="1"/>
</dbReference>
<dbReference type="SUPFAM" id="SSF52788">
    <property type="entry name" value="Phosphotyrosine protein phosphatases I"/>
    <property type="match status" value="1"/>
</dbReference>